<keyword id="KW-0560">Oxidoreductase</keyword>
<keyword id="KW-0663">Pyridoxal phosphate</keyword>
<keyword id="KW-1185">Reference proteome</keyword>
<organism>
    <name type="scientific">Burkholderia mallei (strain ATCC 23344)</name>
    <dbReference type="NCBI Taxonomy" id="243160"/>
    <lineage>
        <taxon>Bacteria</taxon>
        <taxon>Pseudomonadati</taxon>
        <taxon>Pseudomonadota</taxon>
        <taxon>Betaproteobacteria</taxon>
        <taxon>Burkholderiales</taxon>
        <taxon>Burkholderiaceae</taxon>
        <taxon>Burkholderia</taxon>
        <taxon>pseudomallei group</taxon>
    </lineage>
</organism>
<comment type="function">
    <text evidence="1">The glycine cleavage system catalyzes the degradation of glycine. The P protein binds the alpha-amino group of glycine through its pyridoxal phosphate cofactor; CO(2) is released and the remaining methylamine moiety is then transferred to the lipoamide cofactor of the H protein.</text>
</comment>
<comment type="catalytic activity">
    <reaction evidence="1">
        <text>N(6)-[(R)-lipoyl]-L-lysyl-[glycine-cleavage complex H protein] + glycine + H(+) = N(6)-[(R)-S(8)-aminomethyldihydrolipoyl]-L-lysyl-[glycine-cleavage complex H protein] + CO2</text>
        <dbReference type="Rhea" id="RHEA:24304"/>
        <dbReference type="Rhea" id="RHEA-COMP:10494"/>
        <dbReference type="Rhea" id="RHEA-COMP:10495"/>
        <dbReference type="ChEBI" id="CHEBI:15378"/>
        <dbReference type="ChEBI" id="CHEBI:16526"/>
        <dbReference type="ChEBI" id="CHEBI:57305"/>
        <dbReference type="ChEBI" id="CHEBI:83099"/>
        <dbReference type="ChEBI" id="CHEBI:83143"/>
        <dbReference type="EC" id="1.4.4.2"/>
    </reaction>
</comment>
<comment type="cofactor">
    <cofactor evidence="1">
        <name>pyridoxal 5'-phosphate</name>
        <dbReference type="ChEBI" id="CHEBI:597326"/>
    </cofactor>
</comment>
<comment type="subunit">
    <text evidence="1">The glycine cleavage system is composed of four proteins: P, T, L and H.</text>
</comment>
<comment type="similarity">
    <text evidence="1">Belongs to the GcvP family.</text>
</comment>
<dbReference type="EC" id="1.4.4.2" evidence="1"/>
<dbReference type="EMBL" id="CP000010">
    <property type="protein sequence ID" value="AAU48413.1"/>
    <property type="molecule type" value="Genomic_DNA"/>
</dbReference>
<dbReference type="RefSeq" id="WP_004195877.1">
    <property type="nucleotide sequence ID" value="NC_006348.1"/>
</dbReference>
<dbReference type="RefSeq" id="YP_104496.1">
    <property type="nucleotide sequence ID" value="NC_006348.1"/>
</dbReference>
<dbReference type="SMR" id="Q62FN1"/>
<dbReference type="GeneID" id="92980672"/>
<dbReference type="KEGG" id="bma:BMA2993"/>
<dbReference type="PATRIC" id="fig|243160.12.peg.3070"/>
<dbReference type="eggNOG" id="COG0403">
    <property type="taxonomic scope" value="Bacteria"/>
</dbReference>
<dbReference type="eggNOG" id="COG1003">
    <property type="taxonomic scope" value="Bacteria"/>
</dbReference>
<dbReference type="HOGENOM" id="CLU_004620_2_1_4"/>
<dbReference type="Proteomes" id="UP000006693">
    <property type="component" value="Chromosome 1"/>
</dbReference>
<dbReference type="GO" id="GO:0005829">
    <property type="term" value="C:cytosol"/>
    <property type="evidence" value="ECO:0007669"/>
    <property type="project" value="TreeGrafter"/>
</dbReference>
<dbReference type="GO" id="GO:0005960">
    <property type="term" value="C:glycine cleavage complex"/>
    <property type="evidence" value="ECO:0007669"/>
    <property type="project" value="TreeGrafter"/>
</dbReference>
<dbReference type="GO" id="GO:0016594">
    <property type="term" value="F:glycine binding"/>
    <property type="evidence" value="ECO:0007669"/>
    <property type="project" value="TreeGrafter"/>
</dbReference>
<dbReference type="GO" id="GO:0004375">
    <property type="term" value="F:glycine dehydrogenase (decarboxylating) activity"/>
    <property type="evidence" value="ECO:0007669"/>
    <property type="project" value="UniProtKB-EC"/>
</dbReference>
<dbReference type="GO" id="GO:0030170">
    <property type="term" value="F:pyridoxal phosphate binding"/>
    <property type="evidence" value="ECO:0007669"/>
    <property type="project" value="TreeGrafter"/>
</dbReference>
<dbReference type="GO" id="GO:0019464">
    <property type="term" value="P:glycine decarboxylation via glycine cleavage system"/>
    <property type="evidence" value="ECO:0007669"/>
    <property type="project" value="UniProtKB-UniRule"/>
</dbReference>
<dbReference type="CDD" id="cd00613">
    <property type="entry name" value="GDC-P"/>
    <property type="match status" value="2"/>
</dbReference>
<dbReference type="FunFam" id="3.40.640.10:FF:000005">
    <property type="entry name" value="Glycine dehydrogenase (decarboxylating), mitochondrial"/>
    <property type="match status" value="1"/>
</dbReference>
<dbReference type="FunFam" id="3.90.1150.10:FF:000007">
    <property type="entry name" value="Glycine dehydrogenase (decarboxylating), mitochondrial"/>
    <property type="match status" value="1"/>
</dbReference>
<dbReference type="FunFam" id="3.40.640.10:FF:000007">
    <property type="entry name" value="glycine dehydrogenase (Decarboxylating), mitochondrial"/>
    <property type="match status" value="1"/>
</dbReference>
<dbReference type="Gene3D" id="3.90.1150.10">
    <property type="entry name" value="Aspartate Aminotransferase, domain 1"/>
    <property type="match status" value="2"/>
</dbReference>
<dbReference type="Gene3D" id="3.40.640.10">
    <property type="entry name" value="Type I PLP-dependent aspartate aminotransferase-like (Major domain)"/>
    <property type="match status" value="2"/>
</dbReference>
<dbReference type="HAMAP" id="MF_00711">
    <property type="entry name" value="GcvP"/>
    <property type="match status" value="1"/>
</dbReference>
<dbReference type="InterPro" id="IPR003437">
    <property type="entry name" value="GcvP"/>
</dbReference>
<dbReference type="InterPro" id="IPR049316">
    <property type="entry name" value="GDC-P_C"/>
</dbReference>
<dbReference type="InterPro" id="IPR049315">
    <property type="entry name" value="GDC-P_N"/>
</dbReference>
<dbReference type="InterPro" id="IPR020581">
    <property type="entry name" value="GDC_P"/>
</dbReference>
<dbReference type="InterPro" id="IPR015424">
    <property type="entry name" value="PyrdxlP-dep_Trfase"/>
</dbReference>
<dbReference type="InterPro" id="IPR015421">
    <property type="entry name" value="PyrdxlP-dep_Trfase_major"/>
</dbReference>
<dbReference type="InterPro" id="IPR015422">
    <property type="entry name" value="PyrdxlP-dep_Trfase_small"/>
</dbReference>
<dbReference type="NCBIfam" id="TIGR00461">
    <property type="entry name" value="gcvP"/>
    <property type="match status" value="1"/>
</dbReference>
<dbReference type="NCBIfam" id="NF003346">
    <property type="entry name" value="PRK04366.1"/>
    <property type="match status" value="1"/>
</dbReference>
<dbReference type="PANTHER" id="PTHR11773:SF1">
    <property type="entry name" value="GLYCINE DEHYDROGENASE (DECARBOXYLATING), MITOCHONDRIAL"/>
    <property type="match status" value="1"/>
</dbReference>
<dbReference type="PANTHER" id="PTHR11773">
    <property type="entry name" value="GLYCINE DEHYDROGENASE, DECARBOXYLATING"/>
    <property type="match status" value="1"/>
</dbReference>
<dbReference type="Pfam" id="PF21478">
    <property type="entry name" value="GcvP2_C"/>
    <property type="match status" value="1"/>
</dbReference>
<dbReference type="Pfam" id="PF02347">
    <property type="entry name" value="GDC-P"/>
    <property type="match status" value="2"/>
</dbReference>
<dbReference type="SUPFAM" id="SSF53383">
    <property type="entry name" value="PLP-dependent transferases"/>
    <property type="match status" value="2"/>
</dbReference>
<feature type="chain" id="PRO_0000227097" description="Glycine dehydrogenase (decarboxylating)">
    <location>
        <begin position="1"/>
        <end position="975"/>
    </location>
</feature>
<feature type="modified residue" description="N6-(pyridoxal phosphate)lysine" evidence="1">
    <location>
        <position position="723"/>
    </location>
</feature>
<protein>
    <recommendedName>
        <fullName evidence="1">Glycine dehydrogenase (decarboxylating)</fullName>
        <ecNumber evidence="1">1.4.4.2</ecNumber>
    </recommendedName>
    <alternativeName>
        <fullName evidence="1">Glycine cleavage system P-protein</fullName>
    </alternativeName>
    <alternativeName>
        <fullName evidence="1">Glycine decarboxylase</fullName>
    </alternativeName>
    <alternativeName>
        <fullName evidence="1">Glycine dehydrogenase (aminomethyl-transferring)</fullName>
    </alternativeName>
</protein>
<name>GCSP_BURMA</name>
<gene>
    <name evidence="1" type="primary">gcvP</name>
    <name type="ordered locus">BMA2993</name>
</gene>
<reference key="1">
    <citation type="journal article" date="2004" name="Proc. Natl. Acad. Sci. U.S.A.">
        <title>Structural flexibility in the Burkholderia mallei genome.</title>
        <authorList>
            <person name="Nierman W.C."/>
            <person name="DeShazer D."/>
            <person name="Kim H.S."/>
            <person name="Tettelin H."/>
            <person name="Nelson K.E."/>
            <person name="Feldblyum T.V."/>
            <person name="Ulrich R.L."/>
            <person name="Ronning C.M."/>
            <person name="Brinkac L.M."/>
            <person name="Daugherty S.C."/>
            <person name="Davidsen T.D."/>
            <person name="DeBoy R.T."/>
            <person name="Dimitrov G."/>
            <person name="Dodson R.J."/>
            <person name="Durkin A.S."/>
            <person name="Gwinn M.L."/>
            <person name="Haft D.H."/>
            <person name="Khouri H.M."/>
            <person name="Kolonay J.F."/>
            <person name="Madupu R."/>
            <person name="Mohammoud Y."/>
            <person name="Nelson W.C."/>
            <person name="Radune D."/>
            <person name="Romero C.M."/>
            <person name="Sarria S."/>
            <person name="Selengut J."/>
            <person name="Shamblin C."/>
            <person name="Sullivan S.A."/>
            <person name="White O."/>
            <person name="Yu Y."/>
            <person name="Zafar N."/>
            <person name="Zhou L."/>
            <person name="Fraser C.M."/>
        </authorList>
    </citation>
    <scope>NUCLEOTIDE SEQUENCE [LARGE SCALE GENOMIC DNA]</scope>
    <source>
        <strain>ATCC 23344</strain>
    </source>
</reference>
<proteinExistence type="inferred from homology"/>
<evidence type="ECO:0000255" key="1">
    <source>
        <dbReference type="HAMAP-Rule" id="MF_00711"/>
    </source>
</evidence>
<accession>Q62FN1</accession>
<sequence>MKLEHPDRLMNRTPLSLAALETHDAFAERHIGPDAASQQAMLDTLGFATRAALIDAVIPASIRRAETLPLGPFAQPKSEAEALAALRALADKNQVFRSYIGQGYYDTHTPAVILRNVLENPAWYTAYTPYQPEISQGRLEALLNFQQMVADLTGLEISNASLLDEATAAAEAMTLLQRVGKPQSNVFYVADDVLPQTLEVIKTRAKPIGIEVKSGPAADAAAANAFGVLLQYPGANGDVRDYRALADAIHAAGGHVVVAADILALTVLMPPGEWGADVAVGNTQRFGVPMGFGGPHAAYMAVRDEFKRQMPGRLVGVTVDAQGKPALRLALQTREQHIRREKATSNVCTAQALLAIMASMYAVYHGPRGLKTIALRVNRIAALLAAGIRHLGYATVNDTFFDTLTIDTGARTAQLHAFAQAKRINLRRAGDTRVGVSVDETTTRADLADLLTIFAQAAGATAPDIDALDAGLLPAPALPPSLERTSAYLTHHVFNRHHSETEMLRYLRSLSDKDLALDRSMIPLGSCTMKLNATSEMLPVTWPEFGRIHPFAPAEQTVGYREMIDQLEQMLVAATGYAAVSLQPNAGSQGEYAGLLIIHAYHESRGESHRDVCLIPASAHGTNPASAHMAGMKVVVVACDAQGNVDIADLKAKADAHSHDLAAIMITYPSTHGVFEQNVREICEIVHAHGGQVYVDGANMNAMVGLTAPGQFGGDVSHLNLHKTFCIPHGGGGPGVGPVAVGPHLAKFLPNQRSTGYARGEDGIGAVSAAPYGSASILPISWMYIAMMGAKNLTAATETAILNANYIAKRLAPHYPVLYSGPGGLVAHECILDLRPIKDSSGITVDDVAKRLMDYGFHAPTMSFPVPGTLMVEPTESESQEELDRFIAAMIAIRDEIRAVEEGRADREDNPLRHAPHTAAVVTANEWPHAYSREQAAFPVASLVANKYWPPVGRADNAYGDRNLFCSCVPVSDYA</sequence>